<proteinExistence type="inferred from homology"/>
<keyword id="KW-0067">ATP-binding</keyword>
<keyword id="KW-0418">Kinase</keyword>
<keyword id="KW-0464">Manganese</keyword>
<keyword id="KW-0479">Metal-binding</keyword>
<keyword id="KW-0547">Nucleotide-binding</keyword>
<keyword id="KW-0597">Phosphoprotein</keyword>
<keyword id="KW-1185">Reference proteome</keyword>
<keyword id="KW-0723">Serine/threonine-protein kinase</keyword>
<keyword id="KW-0808">Transferase</keyword>
<sequence>MEINNSNNNNNYVCAQHNRIEHANHHDLPDSDSDSSSREEELMNSSGGGNGKEPIGEKKKLPSHISEVISNERRESIIRELQQIKTISDYPSQANQYNLIEPIGEGTEGRVFKAYCIPLKENVAIKVVELDKMDPQFVKDVIKEVKVMNGNNHPNLIHYHTSFLENNQLWLVMDYLGGGSLADIMKFKYPDGIPEVLAVTVLKSLLKGLEYLHSHQRIHRDLKSDNILIGEDGAIELADFGVSAMFEKNTCCSRKTIVGTPCWMAPEIISERGYNQGVDIWSFGITAIELIRGKPPGYDLPPSKVFMNLLFGNSPSLQEEEDKGVCSHLYKDLVDKCLQKEPSKRPNASKLLEHKVFKQAKKNNYIVSHLLHGLTPCEDRYRESMSPASSNTPSPDSSRPSSPEHYNHGNVVNSPLQKNIKPSSLNKSSSSLELKNKNLSNPDLVNMPRAASHPVELNALELSSGSGPLSQSSDLPHGHLHKIGTPKKKHSPSGSIGDSHGSISPPLSTSPEKERKKGFFNHFRRHSIAKLFGSPKEGDHNHQHHKSEGDHEHHHFHFPWKHHHHSSSNNHVET</sequence>
<comment type="catalytic activity">
    <reaction evidence="1">
        <text>L-seryl-[protein] + ATP = O-phospho-L-seryl-[protein] + ADP + H(+)</text>
        <dbReference type="Rhea" id="RHEA:17989"/>
        <dbReference type="Rhea" id="RHEA-COMP:9863"/>
        <dbReference type="Rhea" id="RHEA-COMP:11604"/>
        <dbReference type="ChEBI" id="CHEBI:15378"/>
        <dbReference type="ChEBI" id="CHEBI:29999"/>
        <dbReference type="ChEBI" id="CHEBI:30616"/>
        <dbReference type="ChEBI" id="CHEBI:83421"/>
        <dbReference type="ChEBI" id="CHEBI:456216"/>
        <dbReference type="EC" id="2.7.11.1"/>
    </reaction>
</comment>
<comment type="catalytic activity">
    <reaction evidence="1">
        <text>L-threonyl-[protein] + ATP = O-phospho-L-threonyl-[protein] + ADP + H(+)</text>
        <dbReference type="Rhea" id="RHEA:46608"/>
        <dbReference type="Rhea" id="RHEA-COMP:11060"/>
        <dbReference type="Rhea" id="RHEA-COMP:11605"/>
        <dbReference type="ChEBI" id="CHEBI:15378"/>
        <dbReference type="ChEBI" id="CHEBI:30013"/>
        <dbReference type="ChEBI" id="CHEBI:30616"/>
        <dbReference type="ChEBI" id="CHEBI:61977"/>
        <dbReference type="ChEBI" id="CHEBI:456216"/>
        <dbReference type="EC" id="2.7.11.1"/>
    </reaction>
</comment>
<comment type="cofactor">
    <cofactor evidence="1">
        <name>Mn(2+)</name>
        <dbReference type="ChEBI" id="CHEBI:29035"/>
    </cofactor>
</comment>
<comment type="PTM">
    <text evidence="1">Undergoes autophosphorylation in the catalytic domain.</text>
</comment>
<comment type="similarity">
    <text evidence="1 5">Belongs to the protein kinase superfamily. STE Ser/Thr protein kinase family. STE20 subfamily.</text>
</comment>
<feature type="chain" id="PRO_0000361650" description="Serine/threonine-protein kinase fray1">
    <location>
        <begin position="1"/>
        <end position="574"/>
    </location>
</feature>
<feature type="domain" description="Protein kinase" evidence="3">
    <location>
        <begin position="97"/>
        <end position="357"/>
    </location>
</feature>
<feature type="region of interest" description="Disordered" evidence="4">
    <location>
        <begin position="24"/>
        <end position="64"/>
    </location>
</feature>
<feature type="region of interest" description="Disordered" evidence="4">
    <location>
        <begin position="381"/>
        <end position="447"/>
    </location>
</feature>
<feature type="region of interest" description="Disordered" evidence="4">
    <location>
        <begin position="462"/>
        <end position="514"/>
    </location>
</feature>
<feature type="region of interest" description="Disordered" evidence="4">
    <location>
        <begin position="532"/>
        <end position="554"/>
    </location>
</feature>
<feature type="compositionally biased region" description="Basic and acidic residues" evidence="4">
    <location>
        <begin position="24"/>
        <end position="41"/>
    </location>
</feature>
<feature type="compositionally biased region" description="Low complexity" evidence="4">
    <location>
        <begin position="386"/>
        <end position="403"/>
    </location>
</feature>
<feature type="compositionally biased region" description="Low complexity" evidence="4">
    <location>
        <begin position="418"/>
        <end position="441"/>
    </location>
</feature>
<feature type="compositionally biased region" description="Low complexity" evidence="4">
    <location>
        <begin position="462"/>
        <end position="475"/>
    </location>
</feature>
<feature type="compositionally biased region" description="Basic residues" evidence="4">
    <location>
        <begin position="478"/>
        <end position="491"/>
    </location>
</feature>
<feature type="compositionally biased region" description="Low complexity" evidence="4">
    <location>
        <begin position="492"/>
        <end position="506"/>
    </location>
</feature>
<feature type="compositionally biased region" description="Basic and acidic residues" evidence="4">
    <location>
        <begin position="536"/>
        <end position="553"/>
    </location>
</feature>
<feature type="active site" description="Proton acceptor" evidence="2 3">
    <location>
        <position position="221"/>
    </location>
</feature>
<feature type="binding site" evidence="2 3">
    <location>
        <begin position="103"/>
        <end position="111"/>
    </location>
    <ligand>
        <name>ATP</name>
        <dbReference type="ChEBI" id="CHEBI:30616"/>
    </ligand>
</feature>
<feature type="binding site" evidence="2 3">
    <location>
        <position position="126"/>
    </location>
    <ligand>
        <name>ATP</name>
        <dbReference type="ChEBI" id="CHEBI:30616"/>
    </ligand>
</feature>
<feature type="modified residue" description="Phosphothreonine; by autocatalysis" evidence="1">
    <location>
        <position position="256"/>
    </location>
</feature>
<gene>
    <name evidence="7" type="primary">fray1</name>
    <name type="ORF">DDB_G0278863</name>
</gene>
<reference evidence="7" key="1">
    <citation type="journal article" date="2005" name="Nature">
        <title>The genome of the social amoeba Dictyostelium discoideum.</title>
        <authorList>
            <person name="Eichinger L."/>
            <person name="Pachebat J.A."/>
            <person name="Gloeckner G."/>
            <person name="Rajandream M.A."/>
            <person name="Sucgang R."/>
            <person name="Berriman M."/>
            <person name="Song J."/>
            <person name="Olsen R."/>
            <person name="Szafranski K."/>
            <person name="Xu Q."/>
            <person name="Tunggal B."/>
            <person name="Kummerfeld S."/>
            <person name="Madera M."/>
            <person name="Konfortov B.A."/>
            <person name="Rivero F."/>
            <person name="Bankier A.T."/>
            <person name="Lehmann R."/>
            <person name="Hamlin N."/>
            <person name="Davies R."/>
            <person name="Gaudet P."/>
            <person name="Fey P."/>
            <person name="Pilcher K."/>
            <person name="Chen G."/>
            <person name="Saunders D."/>
            <person name="Sodergren E.J."/>
            <person name="Davis P."/>
            <person name="Kerhornou A."/>
            <person name="Nie X."/>
            <person name="Hall N."/>
            <person name="Anjard C."/>
            <person name="Hemphill L."/>
            <person name="Bason N."/>
            <person name="Farbrother P."/>
            <person name="Desany B."/>
            <person name="Just E."/>
            <person name="Morio T."/>
            <person name="Rost R."/>
            <person name="Churcher C.M."/>
            <person name="Cooper J."/>
            <person name="Haydock S."/>
            <person name="van Driessche N."/>
            <person name="Cronin A."/>
            <person name="Goodhead I."/>
            <person name="Muzny D.M."/>
            <person name="Mourier T."/>
            <person name="Pain A."/>
            <person name="Lu M."/>
            <person name="Harper D."/>
            <person name="Lindsay R."/>
            <person name="Hauser H."/>
            <person name="James K.D."/>
            <person name="Quiles M."/>
            <person name="Madan Babu M."/>
            <person name="Saito T."/>
            <person name="Buchrieser C."/>
            <person name="Wardroper A."/>
            <person name="Felder M."/>
            <person name="Thangavelu M."/>
            <person name="Johnson D."/>
            <person name="Knights A."/>
            <person name="Loulseged H."/>
            <person name="Mungall K.L."/>
            <person name="Oliver K."/>
            <person name="Price C."/>
            <person name="Quail M.A."/>
            <person name="Urushihara H."/>
            <person name="Hernandez J."/>
            <person name="Rabbinowitsch E."/>
            <person name="Steffen D."/>
            <person name="Sanders M."/>
            <person name="Ma J."/>
            <person name="Kohara Y."/>
            <person name="Sharp S."/>
            <person name="Simmonds M.N."/>
            <person name="Spiegler S."/>
            <person name="Tivey A."/>
            <person name="Sugano S."/>
            <person name="White B."/>
            <person name="Walker D."/>
            <person name="Woodward J.R."/>
            <person name="Winckler T."/>
            <person name="Tanaka Y."/>
            <person name="Shaulsky G."/>
            <person name="Schleicher M."/>
            <person name="Weinstock G.M."/>
            <person name="Rosenthal A."/>
            <person name="Cox E.C."/>
            <person name="Chisholm R.L."/>
            <person name="Gibbs R.A."/>
            <person name="Loomis W.F."/>
            <person name="Platzer M."/>
            <person name="Kay R.R."/>
            <person name="Williams J.G."/>
            <person name="Dear P.H."/>
            <person name="Noegel A.A."/>
            <person name="Barrell B.G."/>
            <person name="Kuspa A."/>
        </authorList>
    </citation>
    <scope>NUCLEOTIDE SEQUENCE [LARGE SCALE GENOMIC DNA]</scope>
    <source>
        <strain evidence="7">AX4</strain>
    </source>
</reference>
<reference evidence="6" key="2">
    <citation type="journal article" date="2006" name="Eur. J. Cell Biol.">
        <title>Characterization of the Ste20-like kinase Krs1 of Dictyostelium discoideum.</title>
        <authorList>
            <person name="Arasada R."/>
            <person name="Son H."/>
            <person name="Ramalingam N."/>
            <person name="Eichinger L."/>
            <person name="Schleicher M."/>
            <person name="Rohlfs M."/>
        </authorList>
    </citation>
    <scope>CLASSIFICATION</scope>
</reference>
<name>FRAY1_DICDI</name>
<organism>
    <name type="scientific">Dictyostelium discoideum</name>
    <name type="common">Social amoeba</name>
    <dbReference type="NCBI Taxonomy" id="44689"/>
    <lineage>
        <taxon>Eukaryota</taxon>
        <taxon>Amoebozoa</taxon>
        <taxon>Evosea</taxon>
        <taxon>Eumycetozoa</taxon>
        <taxon>Dictyostelia</taxon>
        <taxon>Dictyosteliales</taxon>
        <taxon>Dictyosteliaceae</taxon>
        <taxon>Dictyostelium</taxon>
    </lineage>
</organism>
<evidence type="ECO:0000250" key="1">
    <source>
        <dbReference type="UniProtKB" id="O61125"/>
    </source>
</evidence>
<evidence type="ECO:0000250" key="2">
    <source>
        <dbReference type="UniProtKB" id="P28523"/>
    </source>
</evidence>
<evidence type="ECO:0000255" key="3">
    <source>
        <dbReference type="PROSITE-ProRule" id="PRU00159"/>
    </source>
</evidence>
<evidence type="ECO:0000256" key="4">
    <source>
        <dbReference type="SAM" id="MobiDB-lite"/>
    </source>
</evidence>
<evidence type="ECO:0000269" key="5">
    <source>
    </source>
</evidence>
<evidence type="ECO:0000305" key="6"/>
<evidence type="ECO:0000312" key="7">
    <source>
        <dbReference type="EMBL" id="EAL68033.1"/>
    </source>
</evidence>
<accession>Q54XL6</accession>
<dbReference type="EC" id="2.7.11.1"/>
<dbReference type="EMBL" id="AAFI02000024">
    <property type="protein sequence ID" value="EAL68033.1"/>
    <property type="molecule type" value="Genomic_DNA"/>
</dbReference>
<dbReference type="RefSeq" id="XP_647787.1">
    <property type="nucleotide sequence ID" value="XM_642695.1"/>
</dbReference>
<dbReference type="SMR" id="Q54XL6"/>
<dbReference type="FunCoup" id="Q54XL6">
    <property type="interactions" value="33"/>
</dbReference>
<dbReference type="STRING" id="44689.Q54XL6"/>
<dbReference type="PaxDb" id="44689-DDB0230012"/>
<dbReference type="EnsemblProtists" id="EAL68033">
    <property type="protein sequence ID" value="EAL68033"/>
    <property type="gene ID" value="DDB_G0278863"/>
</dbReference>
<dbReference type="GeneID" id="8621746"/>
<dbReference type="KEGG" id="ddi:DDB_G0278863"/>
<dbReference type="dictyBase" id="DDB_G0278863">
    <property type="gene designation" value="fray1"/>
</dbReference>
<dbReference type="VEuPathDB" id="AmoebaDB:DDB_G0278863"/>
<dbReference type="eggNOG" id="KOG0582">
    <property type="taxonomic scope" value="Eukaryota"/>
</dbReference>
<dbReference type="HOGENOM" id="CLU_475244_0_0_1"/>
<dbReference type="InParanoid" id="Q54XL6"/>
<dbReference type="OMA" id="HHHFHFP"/>
<dbReference type="PhylomeDB" id="Q54XL6"/>
<dbReference type="PRO" id="PR:Q54XL6"/>
<dbReference type="Proteomes" id="UP000002195">
    <property type="component" value="Chromosome 3"/>
</dbReference>
<dbReference type="GO" id="GO:1902554">
    <property type="term" value="C:serine/threonine protein kinase complex"/>
    <property type="evidence" value="ECO:0000318"/>
    <property type="project" value="GO_Central"/>
</dbReference>
<dbReference type="GO" id="GO:0005524">
    <property type="term" value="F:ATP binding"/>
    <property type="evidence" value="ECO:0007669"/>
    <property type="project" value="UniProtKB-KW"/>
</dbReference>
<dbReference type="GO" id="GO:0046872">
    <property type="term" value="F:metal ion binding"/>
    <property type="evidence" value="ECO:0007669"/>
    <property type="project" value="UniProtKB-KW"/>
</dbReference>
<dbReference type="GO" id="GO:0106310">
    <property type="term" value="F:protein serine kinase activity"/>
    <property type="evidence" value="ECO:0007669"/>
    <property type="project" value="RHEA"/>
</dbReference>
<dbReference type="GO" id="GO:0043539">
    <property type="term" value="F:protein serine/threonine kinase activator activity"/>
    <property type="evidence" value="ECO:0000318"/>
    <property type="project" value="GO_Central"/>
</dbReference>
<dbReference type="GO" id="GO:0004674">
    <property type="term" value="F:protein serine/threonine kinase activity"/>
    <property type="evidence" value="ECO:0007669"/>
    <property type="project" value="UniProtKB-KW"/>
</dbReference>
<dbReference type="GO" id="GO:0006611">
    <property type="term" value="P:protein export from nucleus"/>
    <property type="evidence" value="ECO:0000318"/>
    <property type="project" value="GO_Central"/>
</dbReference>
<dbReference type="CDD" id="cd06610">
    <property type="entry name" value="STKc_OSR1_SPAK"/>
    <property type="match status" value="1"/>
</dbReference>
<dbReference type="Gene3D" id="3.30.200.20">
    <property type="entry name" value="Phosphorylase Kinase, domain 1"/>
    <property type="match status" value="1"/>
</dbReference>
<dbReference type="Gene3D" id="1.10.510.10">
    <property type="entry name" value="Transferase(Phosphotransferase) domain 1"/>
    <property type="match status" value="1"/>
</dbReference>
<dbReference type="InterPro" id="IPR011009">
    <property type="entry name" value="Kinase-like_dom_sf"/>
</dbReference>
<dbReference type="InterPro" id="IPR000719">
    <property type="entry name" value="Prot_kinase_dom"/>
</dbReference>
<dbReference type="InterPro" id="IPR047173">
    <property type="entry name" value="STRAD_A/B-like"/>
</dbReference>
<dbReference type="PANTHER" id="PTHR48014">
    <property type="entry name" value="SERINE/THREONINE-PROTEIN KINASE FRAY2"/>
    <property type="match status" value="1"/>
</dbReference>
<dbReference type="PANTHER" id="PTHR48014:SF28">
    <property type="entry name" value="SERINE_THREONINE-PROTEIN KINASE FRAY1"/>
    <property type="match status" value="1"/>
</dbReference>
<dbReference type="Pfam" id="PF00069">
    <property type="entry name" value="Pkinase"/>
    <property type="match status" value="1"/>
</dbReference>
<dbReference type="SMART" id="SM00220">
    <property type="entry name" value="S_TKc"/>
    <property type="match status" value="1"/>
</dbReference>
<dbReference type="SUPFAM" id="SSF56112">
    <property type="entry name" value="Protein kinase-like (PK-like)"/>
    <property type="match status" value="1"/>
</dbReference>
<dbReference type="PROSITE" id="PS50011">
    <property type="entry name" value="PROTEIN_KINASE_DOM"/>
    <property type="match status" value="1"/>
</dbReference>
<protein>
    <recommendedName>
        <fullName evidence="1 7">Serine/threonine-protein kinase fray1</fullName>
        <ecNumber>2.7.11.1</ecNumber>
    </recommendedName>
    <alternativeName>
        <fullName evidence="1">STE20-like kinase fray1</fullName>
    </alternativeName>
</protein>